<sequence>MLDNVLRIATRQSPLALWQAHYVKDKLMASHPGLVVELVPMVTRGDVILDTPLAKVGGKGLFVKELEVALLENRADIAVHSMKDVPVEFPQGLGLVTICKREDPRDAFVSNTYDSLDALPAGSIVGTSSLRRQCQLAERRPDLIIRSLRGNVGTRLSKLDNGEYDAIILAVAGLKRLGLESRIRAALPPEISLPAVGQGAVGIECRLDDARTRELLAALNHHETALRVTAERAMNTRLEGGCQVPIGSYAELIDGEIWLRALVGAPDGSQIIRGERRGAPQDAEQMGISLAEELLNNGAREILAEVYNGDAPA</sequence>
<keyword id="KW-0627">Porphyrin biosynthesis</keyword>
<keyword id="KW-0808">Transferase</keyword>
<comment type="function">
    <text evidence="1">Tetrapolymerization of the monopyrrole PBG into the hydroxymethylbilane pre-uroporphyrinogen in several discrete steps.</text>
</comment>
<comment type="catalytic activity">
    <reaction evidence="1">
        <text>4 porphobilinogen + H2O = hydroxymethylbilane + 4 NH4(+)</text>
        <dbReference type="Rhea" id="RHEA:13185"/>
        <dbReference type="ChEBI" id="CHEBI:15377"/>
        <dbReference type="ChEBI" id="CHEBI:28938"/>
        <dbReference type="ChEBI" id="CHEBI:57845"/>
        <dbReference type="ChEBI" id="CHEBI:58126"/>
        <dbReference type="EC" id="2.5.1.61"/>
    </reaction>
</comment>
<comment type="cofactor">
    <cofactor evidence="1">
        <name>dipyrromethane</name>
        <dbReference type="ChEBI" id="CHEBI:60342"/>
    </cofactor>
    <text evidence="1">Binds 1 dipyrromethane group covalently.</text>
</comment>
<comment type="pathway">
    <text evidence="1">Porphyrin-containing compound metabolism; protoporphyrin-IX biosynthesis; coproporphyrinogen-III from 5-aminolevulinate: step 2/4.</text>
</comment>
<comment type="subunit">
    <text evidence="1">Monomer.</text>
</comment>
<comment type="miscellaneous">
    <text evidence="1">The porphobilinogen subunits are added to the dipyrromethane group.</text>
</comment>
<comment type="similarity">
    <text evidence="1">Belongs to the HMBS family.</text>
</comment>
<proteinExistence type="inferred from homology"/>
<name>HEM3_ECO81</name>
<evidence type="ECO:0000255" key="1">
    <source>
        <dbReference type="HAMAP-Rule" id="MF_00260"/>
    </source>
</evidence>
<feature type="chain" id="PRO_1000125670" description="Porphobilinogen deaminase">
    <location>
        <begin position="1"/>
        <end position="313"/>
    </location>
</feature>
<feature type="modified residue" description="S-(dipyrrolylmethanemethyl)cysteine" evidence="1">
    <location>
        <position position="242"/>
    </location>
</feature>
<accession>B7N295</accession>
<dbReference type="EC" id="2.5.1.61" evidence="1"/>
<dbReference type="EMBL" id="CU928162">
    <property type="protein sequence ID" value="CAR10466.1"/>
    <property type="molecule type" value="Genomic_DNA"/>
</dbReference>
<dbReference type="RefSeq" id="WP_001350879.1">
    <property type="nucleotide sequence ID" value="NC_011745.1"/>
</dbReference>
<dbReference type="SMR" id="B7N295"/>
<dbReference type="KEGG" id="ecq:ECED1_4490"/>
<dbReference type="HOGENOM" id="CLU_019704_0_2_6"/>
<dbReference type="UniPathway" id="UPA00251">
    <property type="reaction ID" value="UER00319"/>
</dbReference>
<dbReference type="Proteomes" id="UP000000748">
    <property type="component" value="Chromosome"/>
</dbReference>
<dbReference type="GO" id="GO:0005737">
    <property type="term" value="C:cytoplasm"/>
    <property type="evidence" value="ECO:0007669"/>
    <property type="project" value="TreeGrafter"/>
</dbReference>
<dbReference type="GO" id="GO:0004418">
    <property type="term" value="F:hydroxymethylbilane synthase activity"/>
    <property type="evidence" value="ECO:0007669"/>
    <property type="project" value="UniProtKB-UniRule"/>
</dbReference>
<dbReference type="GO" id="GO:0006782">
    <property type="term" value="P:protoporphyrinogen IX biosynthetic process"/>
    <property type="evidence" value="ECO:0007669"/>
    <property type="project" value="UniProtKB-UniRule"/>
</dbReference>
<dbReference type="CDD" id="cd13646">
    <property type="entry name" value="PBP2_EcHMBS_like"/>
    <property type="match status" value="1"/>
</dbReference>
<dbReference type="FunFam" id="3.30.160.40:FF:000002">
    <property type="entry name" value="Porphobilinogen deaminase"/>
    <property type="match status" value="1"/>
</dbReference>
<dbReference type="FunFam" id="3.40.190.10:FF:000004">
    <property type="entry name" value="Porphobilinogen deaminase"/>
    <property type="match status" value="1"/>
</dbReference>
<dbReference type="FunFam" id="3.40.190.10:FF:000005">
    <property type="entry name" value="Porphobilinogen deaminase"/>
    <property type="match status" value="1"/>
</dbReference>
<dbReference type="Gene3D" id="3.40.190.10">
    <property type="entry name" value="Periplasmic binding protein-like II"/>
    <property type="match status" value="2"/>
</dbReference>
<dbReference type="Gene3D" id="3.30.160.40">
    <property type="entry name" value="Porphobilinogen deaminase, C-terminal domain"/>
    <property type="match status" value="1"/>
</dbReference>
<dbReference type="HAMAP" id="MF_00260">
    <property type="entry name" value="Porphobil_deam"/>
    <property type="match status" value="1"/>
</dbReference>
<dbReference type="InterPro" id="IPR000860">
    <property type="entry name" value="HemC"/>
</dbReference>
<dbReference type="InterPro" id="IPR022419">
    <property type="entry name" value="Porphobilin_deaminase_cofac_BS"/>
</dbReference>
<dbReference type="InterPro" id="IPR022417">
    <property type="entry name" value="Porphobilin_deaminase_N"/>
</dbReference>
<dbReference type="InterPro" id="IPR022418">
    <property type="entry name" value="Porphobilinogen_deaminase_C"/>
</dbReference>
<dbReference type="InterPro" id="IPR036803">
    <property type="entry name" value="Porphobilinogen_deaminase_C_sf"/>
</dbReference>
<dbReference type="NCBIfam" id="TIGR00212">
    <property type="entry name" value="hemC"/>
    <property type="match status" value="1"/>
</dbReference>
<dbReference type="PANTHER" id="PTHR11557">
    <property type="entry name" value="PORPHOBILINOGEN DEAMINASE"/>
    <property type="match status" value="1"/>
</dbReference>
<dbReference type="PANTHER" id="PTHR11557:SF0">
    <property type="entry name" value="PORPHOBILINOGEN DEAMINASE"/>
    <property type="match status" value="1"/>
</dbReference>
<dbReference type="Pfam" id="PF01379">
    <property type="entry name" value="Porphobil_deam"/>
    <property type="match status" value="1"/>
</dbReference>
<dbReference type="Pfam" id="PF03900">
    <property type="entry name" value="Porphobil_deamC"/>
    <property type="match status" value="1"/>
</dbReference>
<dbReference type="PIRSF" id="PIRSF001438">
    <property type="entry name" value="4pyrrol_synth_OHMeBilane_synth"/>
    <property type="match status" value="1"/>
</dbReference>
<dbReference type="PRINTS" id="PR00151">
    <property type="entry name" value="PORPHBDMNASE"/>
</dbReference>
<dbReference type="SUPFAM" id="SSF53850">
    <property type="entry name" value="Periplasmic binding protein-like II"/>
    <property type="match status" value="1"/>
</dbReference>
<dbReference type="SUPFAM" id="SSF54782">
    <property type="entry name" value="Porphobilinogen deaminase (hydroxymethylbilane synthase), C-terminal domain"/>
    <property type="match status" value="1"/>
</dbReference>
<dbReference type="PROSITE" id="PS00533">
    <property type="entry name" value="PORPHOBILINOGEN_DEAM"/>
    <property type="match status" value="1"/>
</dbReference>
<reference key="1">
    <citation type="journal article" date="2009" name="PLoS Genet.">
        <title>Organised genome dynamics in the Escherichia coli species results in highly diverse adaptive paths.</title>
        <authorList>
            <person name="Touchon M."/>
            <person name="Hoede C."/>
            <person name="Tenaillon O."/>
            <person name="Barbe V."/>
            <person name="Baeriswyl S."/>
            <person name="Bidet P."/>
            <person name="Bingen E."/>
            <person name="Bonacorsi S."/>
            <person name="Bouchier C."/>
            <person name="Bouvet O."/>
            <person name="Calteau A."/>
            <person name="Chiapello H."/>
            <person name="Clermont O."/>
            <person name="Cruveiller S."/>
            <person name="Danchin A."/>
            <person name="Diard M."/>
            <person name="Dossat C."/>
            <person name="Karoui M.E."/>
            <person name="Frapy E."/>
            <person name="Garry L."/>
            <person name="Ghigo J.M."/>
            <person name="Gilles A.M."/>
            <person name="Johnson J."/>
            <person name="Le Bouguenec C."/>
            <person name="Lescat M."/>
            <person name="Mangenot S."/>
            <person name="Martinez-Jehanne V."/>
            <person name="Matic I."/>
            <person name="Nassif X."/>
            <person name="Oztas S."/>
            <person name="Petit M.A."/>
            <person name="Pichon C."/>
            <person name="Rouy Z."/>
            <person name="Ruf C.S."/>
            <person name="Schneider D."/>
            <person name="Tourret J."/>
            <person name="Vacherie B."/>
            <person name="Vallenet D."/>
            <person name="Medigue C."/>
            <person name="Rocha E.P.C."/>
            <person name="Denamur E."/>
        </authorList>
    </citation>
    <scope>NUCLEOTIDE SEQUENCE [LARGE SCALE GENOMIC DNA]</scope>
    <source>
        <strain>ED1a</strain>
    </source>
</reference>
<protein>
    <recommendedName>
        <fullName evidence="1">Porphobilinogen deaminase</fullName>
        <shortName evidence="1">PBG</shortName>
        <ecNumber evidence="1">2.5.1.61</ecNumber>
    </recommendedName>
    <alternativeName>
        <fullName evidence="1">Hydroxymethylbilane synthase</fullName>
        <shortName evidence="1">HMBS</shortName>
    </alternativeName>
    <alternativeName>
        <fullName evidence="1">Pre-uroporphyrinogen synthase</fullName>
    </alternativeName>
</protein>
<gene>
    <name evidence="1" type="primary">hemC</name>
    <name type="ordered locus">ECED1_4490</name>
</gene>
<organism>
    <name type="scientific">Escherichia coli O81 (strain ED1a)</name>
    <dbReference type="NCBI Taxonomy" id="585397"/>
    <lineage>
        <taxon>Bacteria</taxon>
        <taxon>Pseudomonadati</taxon>
        <taxon>Pseudomonadota</taxon>
        <taxon>Gammaproteobacteria</taxon>
        <taxon>Enterobacterales</taxon>
        <taxon>Enterobacteriaceae</taxon>
        <taxon>Escherichia</taxon>
    </lineage>
</organism>